<reference key="1">
    <citation type="journal article" date="2005" name="PLoS Biol.">
        <title>The Wolbachia genome of Brugia malayi: endosymbiont evolution within a human pathogenic nematode.</title>
        <authorList>
            <person name="Foster J."/>
            <person name="Ganatra M."/>
            <person name="Kamal I."/>
            <person name="Ware J."/>
            <person name="Makarova K."/>
            <person name="Ivanova N."/>
            <person name="Bhattacharyya A."/>
            <person name="Kapatral V."/>
            <person name="Kumar S."/>
            <person name="Posfai J."/>
            <person name="Vincze T."/>
            <person name="Ingram J."/>
            <person name="Moran L."/>
            <person name="Lapidus A."/>
            <person name="Omelchenko M."/>
            <person name="Kyrpides N."/>
            <person name="Ghedin E."/>
            <person name="Wang S."/>
            <person name="Goltsman E."/>
            <person name="Joukov V."/>
            <person name="Ostrovskaya O."/>
            <person name="Tsukerman K."/>
            <person name="Mazur M."/>
            <person name="Comb D."/>
            <person name="Koonin E."/>
            <person name="Slatko B."/>
        </authorList>
    </citation>
    <scope>NUCLEOTIDE SEQUENCE [LARGE SCALE GENOMIC DNA]</scope>
    <source>
        <strain>TRS</strain>
    </source>
</reference>
<proteinExistence type="inferred from homology"/>
<name>Y670_WOLTR</name>
<accession>Q5GRW6</accession>
<organism>
    <name type="scientific">Wolbachia sp. subsp. Brugia malayi (strain TRS)</name>
    <dbReference type="NCBI Taxonomy" id="292805"/>
    <lineage>
        <taxon>Bacteria</taxon>
        <taxon>Pseudomonadati</taxon>
        <taxon>Pseudomonadota</taxon>
        <taxon>Alphaproteobacteria</taxon>
        <taxon>Rickettsiales</taxon>
        <taxon>Anaplasmataceae</taxon>
        <taxon>Wolbachieae</taxon>
        <taxon>Wolbachia</taxon>
    </lineage>
</organism>
<feature type="chain" id="PRO_0000175933" description="Probable transcriptional regulatory protein Wbm0670">
    <location>
        <begin position="1"/>
        <end position="249"/>
    </location>
</feature>
<gene>
    <name type="ordered locus">Wbm0670</name>
</gene>
<comment type="subcellular location">
    <subcellularLocation>
        <location evidence="1">Cytoplasm</location>
    </subcellularLocation>
</comment>
<comment type="similarity">
    <text evidence="1">Belongs to the TACO1 family.</text>
</comment>
<keyword id="KW-0963">Cytoplasm</keyword>
<keyword id="KW-0238">DNA-binding</keyword>
<keyword id="KW-1185">Reference proteome</keyword>
<keyword id="KW-0804">Transcription</keyword>
<keyword id="KW-0805">Transcription regulation</keyword>
<protein>
    <recommendedName>
        <fullName evidence="1">Probable transcriptional regulatory protein Wbm0670</fullName>
    </recommendedName>
</protein>
<sequence>MAGHSQFSNIKYRKGAQDAKRSQRFTKLIREITVAAKQGLPDPEFNPRLRSAVFAARKENLPKDRIETAIKNAAGNVAGENYEEIQYEGHGPFGTALIVHVLTNNRNRAASEVRYIFSRKNGSLGETGSVSYLFDHVGLIVYKAESVNFDDLFSHGIELEVLNVEENNIEGLYVITCRVKDFGKVRNAFYAKFGEPELARLSWQPKDLIEISDKKLIDKLSALVEELEDNDDVQYVEGNFAFAGLSLKL</sequence>
<dbReference type="EMBL" id="AE017321">
    <property type="protein sequence ID" value="AAW71258.1"/>
    <property type="molecule type" value="Genomic_DNA"/>
</dbReference>
<dbReference type="RefSeq" id="WP_011256868.1">
    <property type="nucleotide sequence ID" value="NC_006833.1"/>
</dbReference>
<dbReference type="SMR" id="Q5GRW6"/>
<dbReference type="STRING" id="292805.Wbm0670"/>
<dbReference type="KEGG" id="wbm:Wbm0670"/>
<dbReference type="eggNOG" id="COG0217">
    <property type="taxonomic scope" value="Bacteria"/>
</dbReference>
<dbReference type="HOGENOM" id="CLU_062974_2_2_5"/>
<dbReference type="Proteomes" id="UP000000534">
    <property type="component" value="Chromosome"/>
</dbReference>
<dbReference type="GO" id="GO:0005737">
    <property type="term" value="C:cytoplasm"/>
    <property type="evidence" value="ECO:0007669"/>
    <property type="project" value="UniProtKB-SubCell"/>
</dbReference>
<dbReference type="GO" id="GO:0003677">
    <property type="term" value="F:DNA binding"/>
    <property type="evidence" value="ECO:0007669"/>
    <property type="project" value="UniProtKB-UniRule"/>
</dbReference>
<dbReference type="GO" id="GO:0006355">
    <property type="term" value="P:regulation of DNA-templated transcription"/>
    <property type="evidence" value="ECO:0007669"/>
    <property type="project" value="UniProtKB-UniRule"/>
</dbReference>
<dbReference type="FunFam" id="1.10.10.200:FF:000002">
    <property type="entry name" value="Probable transcriptional regulatory protein CLM62_37755"/>
    <property type="match status" value="1"/>
</dbReference>
<dbReference type="Gene3D" id="1.10.10.200">
    <property type="match status" value="1"/>
</dbReference>
<dbReference type="Gene3D" id="3.30.70.980">
    <property type="match status" value="2"/>
</dbReference>
<dbReference type="HAMAP" id="MF_00693">
    <property type="entry name" value="Transcrip_reg_TACO1"/>
    <property type="match status" value="1"/>
</dbReference>
<dbReference type="InterPro" id="IPR017856">
    <property type="entry name" value="Integrase-like_N"/>
</dbReference>
<dbReference type="InterPro" id="IPR048300">
    <property type="entry name" value="TACO1_YebC-like_2nd/3rd_dom"/>
</dbReference>
<dbReference type="InterPro" id="IPR049083">
    <property type="entry name" value="TACO1_YebC_N"/>
</dbReference>
<dbReference type="InterPro" id="IPR002876">
    <property type="entry name" value="Transcrip_reg_TACO1-like"/>
</dbReference>
<dbReference type="InterPro" id="IPR026564">
    <property type="entry name" value="Transcrip_reg_TACO1-like_dom3"/>
</dbReference>
<dbReference type="InterPro" id="IPR029072">
    <property type="entry name" value="YebC-like"/>
</dbReference>
<dbReference type="NCBIfam" id="NF001030">
    <property type="entry name" value="PRK00110.1"/>
    <property type="match status" value="1"/>
</dbReference>
<dbReference type="NCBIfam" id="NF009044">
    <property type="entry name" value="PRK12378.1"/>
    <property type="match status" value="1"/>
</dbReference>
<dbReference type="NCBIfam" id="TIGR01033">
    <property type="entry name" value="YebC/PmpR family DNA-binding transcriptional regulator"/>
    <property type="match status" value="1"/>
</dbReference>
<dbReference type="PANTHER" id="PTHR12532:SF11">
    <property type="match status" value="1"/>
</dbReference>
<dbReference type="PANTHER" id="PTHR12532">
    <property type="entry name" value="TRANSLATIONAL ACTIVATOR OF CYTOCHROME C OXIDASE 1"/>
    <property type="match status" value="1"/>
</dbReference>
<dbReference type="Pfam" id="PF20772">
    <property type="entry name" value="TACO1_YebC_N"/>
    <property type="match status" value="1"/>
</dbReference>
<dbReference type="Pfam" id="PF01709">
    <property type="entry name" value="Transcrip_reg"/>
    <property type="match status" value="1"/>
</dbReference>
<dbReference type="SUPFAM" id="SSF75625">
    <property type="entry name" value="YebC-like"/>
    <property type="match status" value="1"/>
</dbReference>
<evidence type="ECO:0000255" key="1">
    <source>
        <dbReference type="HAMAP-Rule" id="MF_00693"/>
    </source>
</evidence>